<accession>A5UIW0</accession>
<protein>
    <recommendedName>
        <fullName evidence="1">Succinate--CoA ligase [ADP-forming] subunit beta</fullName>
        <ecNumber evidence="1">6.2.1.5</ecNumber>
    </recommendedName>
    <alternativeName>
        <fullName evidence="1">Succinyl-CoA synthetase subunit beta</fullName>
        <shortName evidence="1">SCS-beta</shortName>
    </alternativeName>
</protein>
<reference key="1">
    <citation type="journal article" date="2007" name="Genome Biol.">
        <title>Characterization and modeling of the Haemophilus influenzae core and supragenomes based on the complete genomic sequences of Rd and 12 clinical nontypeable strains.</title>
        <authorList>
            <person name="Hogg J.S."/>
            <person name="Hu F.Z."/>
            <person name="Janto B."/>
            <person name="Boissy R."/>
            <person name="Hayes J."/>
            <person name="Keefe R."/>
            <person name="Post J.C."/>
            <person name="Ehrlich G.D."/>
        </authorList>
    </citation>
    <scope>NUCLEOTIDE SEQUENCE [LARGE SCALE GENOMIC DNA]</scope>
    <source>
        <strain>PittGG</strain>
    </source>
</reference>
<evidence type="ECO:0000255" key="1">
    <source>
        <dbReference type="HAMAP-Rule" id="MF_00558"/>
    </source>
</evidence>
<proteinExistence type="inferred from homology"/>
<dbReference type="EC" id="6.2.1.5" evidence="1"/>
<dbReference type="EMBL" id="CP000672">
    <property type="protein sequence ID" value="ABR00716.1"/>
    <property type="molecule type" value="Genomic_DNA"/>
</dbReference>
<dbReference type="SMR" id="A5UIW0"/>
<dbReference type="KEGG" id="hiq:CGSHiGG_09690"/>
<dbReference type="HOGENOM" id="CLU_037430_0_2_6"/>
<dbReference type="UniPathway" id="UPA00223">
    <property type="reaction ID" value="UER00999"/>
</dbReference>
<dbReference type="Proteomes" id="UP000001990">
    <property type="component" value="Chromosome"/>
</dbReference>
<dbReference type="GO" id="GO:0005829">
    <property type="term" value="C:cytosol"/>
    <property type="evidence" value="ECO:0007669"/>
    <property type="project" value="TreeGrafter"/>
</dbReference>
<dbReference type="GO" id="GO:0042709">
    <property type="term" value="C:succinate-CoA ligase complex"/>
    <property type="evidence" value="ECO:0007669"/>
    <property type="project" value="TreeGrafter"/>
</dbReference>
<dbReference type="GO" id="GO:0005524">
    <property type="term" value="F:ATP binding"/>
    <property type="evidence" value="ECO:0007669"/>
    <property type="project" value="UniProtKB-UniRule"/>
</dbReference>
<dbReference type="GO" id="GO:0000287">
    <property type="term" value="F:magnesium ion binding"/>
    <property type="evidence" value="ECO:0007669"/>
    <property type="project" value="UniProtKB-UniRule"/>
</dbReference>
<dbReference type="GO" id="GO:0004775">
    <property type="term" value="F:succinate-CoA ligase (ADP-forming) activity"/>
    <property type="evidence" value="ECO:0007669"/>
    <property type="project" value="UniProtKB-UniRule"/>
</dbReference>
<dbReference type="GO" id="GO:0004776">
    <property type="term" value="F:succinate-CoA ligase (GDP-forming) activity"/>
    <property type="evidence" value="ECO:0007669"/>
    <property type="project" value="RHEA"/>
</dbReference>
<dbReference type="GO" id="GO:0006104">
    <property type="term" value="P:succinyl-CoA metabolic process"/>
    <property type="evidence" value="ECO:0007669"/>
    <property type="project" value="TreeGrafter"/>
</dbReference>
<dbReference type="GO" id="GO:0006099">
    <property type="term" value="P:tricarboxylic acid cycle"/>
    <property type="evidence" value="ECO:0007669"/>
    <property type="project" value="UniProtKB-UniRule"/>
</dbReference>
<dbReference type="FunFam" id="3.30.1490.20:FF:000002">
    <property type="entry name" value="Succinate--CoA ligase [ADP-forming] subunit beta"/>
    <property type="match status" value="1"/>
</dbReference>
<dbReference type="FunFam" id="3.30.470.20:FF:000002">
    <property type="entry name" value="Succinate--CoA ligase [ADP-forming] subunit beta"/>
    <property type="match status" value="1"/>
</dbReference>
<dbReference type="FunFam" id="3.40.50.261:FF:000001">
    <property type="entry name" value="Succinate--CoA ligase [ADP-forming] subunit beta"/>
    <property type="match status" value="1"/>
</dbReference>
<dbReference type="Gene3D" id="3.30.1490.20">
    <property type="entry name" value="ATP-grasp fold, A domain"/>
    <property type="match status" value="1"/>
</dbReference>
<dbReference type="Gene3D" id="3.30.470.20">
    <property type="entry name" value="ATP-grasp fold, B domain"/>
    <property type="match status" value="1"/>
</dbReference>
<dbReference type="Gene3D" id="3.40.50.261">
    <property type="entry name" value="Succinyl-CoA synthetase domains"/>
    <property type="match status" value="1"/>
</dbReference>
<dbReference type="HAMAP" id="MF_00558">
    <property type="entry name" value="Succ_CoA_beta"/>
    <property type="match status" value="1"/>
</dbReference>
<dbReference type="InterPro" id="IPR013650">
    <property type="entry name" value="ATP-grasp_succ-CoA_synth-type"/>
</dbReference>
<dbReference type="InterPro" id="IPR013815">
    <property type="entry name" value="ATP_grasp_subdomain_1"/>
</dbReference>
<dbReference type="InterPro" id="IPR017866">
    <property type="entry name" value="Succ-CoA_synthase_bsu_CS"/>
</dbReference>
<dbReference type="InterPro" id="IPR005811">
    <property type="entry name" value="SUCC_ACL_C"/>
</dbReference>
<dbReference type="InterPro" id="IPR005809">
    <property type="entry name" value="Succ_CoA_ligase-like_bsu"/>
</dbReference>
<dbReference type="InterPro" id="IPR016102">
    <property type="entry name" value="Succinyl-CoA_synth-like"/>
</dbReference>
<dbReference type="NCBIfam" id="NF001913">
    <property type="entry name" value="PRK00696.1"/>
    <property type="match status" value="1"/>
</dbReference>
<dbReference type="NCBIfam" id="TIGR01016">
    <property type="entry name" value="sucCoAbeta"/>
    <property type="match status" value="1"/>
</dbReference>
<dbReference type="PANTHER" id="PTHR11815:SF10">
    <property type="entry name" value="SUCCINATE--COA LIGASE [GDP-FORMING] SUBUNIT BETA, MITOCHONDRIAL"/>
    <property type="match status" value="1"/>
</dbReference>
<dbReference type="PANTHER" id="PTHR11815">
    <property type="entry name" value="SUCCINYL-COA SYNTHETASE BETA CHAIN"/>
    <property type="match status" value="1"/>
</dbReference>
<dbReference type="Pfam" id="PF08442">
    <property type="entry name" value="ATP-grasp_2"/>
    <property type="match status" value="1"/>
</dbReference>
<dbReference type="Pfam" id="PF00549">
    <property type="entry name" value="Ligase_CoA"/>
    <property type="match status" value="1"/>
</dbReference>
<dbReference type="PIRSF" id="PIRSF001554">
    <property type="entry name" value="SucCS_beta"/>
    <property type="match status" value="1"/>
</dbReference>
<dbReference type="SUPFAM" id="SSF56059">
    <property type="entry name" value="Glutathione synthetase ATP-binding domain-like"/>
    <property type="match status" value="1"/>
</dbReference>
<dbReference type="SUPFAM" id="SSF52210">
    <property type="entry name" value="Succinyl-CoA synthetase domains"/>
    <property type="match status" value="1"/>
</dbReference>
<dbReference type="PROSITE" id="PS01217">
    <property type="entry name" value="SUCCINYL_COA_LIG_3"/>
    <property type="match status" value="1"/>
</dbReference>
<comment type="function">
    <text evidence="1">Succinyl-CoA synthetase functions in the citric acid cycle (TCA), coupling the hydrolysis of succinyl-CoA to the synthesis of either ATP or GTP and thus represents the only step of substrate-level phosphorylation in the TCA. The beta subunit provides nucleotide specificity of the enzyme and binds the substrate succinate, while the binding sites for coenzyme A and phosphate are found in the alpha subunit.</text>
</comment>
<comment type="catalytic activity">
    <reaction evidence="1">
        <text>succinate + ATP + CoA = succinyl-CoA + ADP + phosphate</text>
        <dbReference type="Rhea" id="RHEA:17661"/>
        <dbReference type="ChEBI" id="CHEBI:30031"/>
        <dbReference type="ChEBI" id="CHEBI:30616"/>
        <dbReference type="ChEBI" id="CHEBI:43474"/>
        <dbReference type="ChEBI" id="CHEBI:57287"/>
        <dbReference type="ChEBI" id="CHEBI:57292"/>
        <dbReference type="ChEBI" id="CHEBI:456216"/>
        <dbReference type="EC" id="6.2.1.5"/>
    </reaction>
    <physiologicalReaction direction="right-to-left" evidence="1">
        <dbReference type="Rhea" id="RHEA:17663"/>
    </physiologicalReaction>
</comment>
<comment type="catalytic activity">
    <reaction evidence="1">
        <text>GTP + succinate + CoA = succinyl-CoA + GDP + phosphate</text>
        <dbReference type="Rhea" id="RHEA:22120"/>
        <dbReference type="ChEBI" id="CHEBI:30031"/>
        <dbReference type="ChEBI" id="CHEBI:37565"/>
        <dbReference type="ChEBI" id="CHEBI:43474"/>
        <dbReference type="ChEBI" id="CHEBI:57287"/>
        <dbReference type="ChEBI" id="CHEBI:57292"/>
        <dbReference type="ChEBI" id="CHEBI:58189"/>
    </reaction>
    <physiologicalReaction direction="right-to-left" evidence="1">
        <dbReference type="Rhea" id="RHEA:22122"/>
    </physiologicalReaction>
</comment>
<comment type="cofactor">
    <cofactor evidence="1">
        <name>Mg(2+)</name>
        <dbReference type="ChEBI" id="CHEBI:18420"/>
    </cofactor>
    <text evidence="1">Binds 1 Mg(2+) ion per subunit.</text>
</comment>
<comment type="pathway">
    <text evidence="1">Carbohydrate metabolism; tricarboxylic acid cycle; succinate from succinyl-CoA (ligase route): step 1/1.</text>
</comment>
<comment type="subunit">
    <text evidence="1">Heterotetramer of two alpha and two beta subunits.</text>
</comment>
<comment type="similarity">
    <text evidence="1">Belongs to the succinate/malate CoA ligase beta subunit family.</text>
</comment>
<keyword id="KW-0067">ATP-binding</keyword>
<keyword id="KW-0436">Ligase</keyword>
<keyword id="KW-0460">Magnesium</keyword>
<keyword id="KW-0479">Metal-binding</keyword>
<keyword id="KW-0547">Nucleotide-binding</keyword>
<keyword id="KW-0816">Tricarboxylic acid cycle</keyword>
<feature type="chain" id="PRO_1000082099" description="Succinate--CoA ligase [ADP-forming] subunit beta">
    <location>
        <begin position="1"/>
        <end position="394"/>
    </location>
</feature>
<feature type="binding site" evidence="1">
    <location>
        <position position="46"/>
    </location>
    <ligand>
        <name>ATP</name>
        <dbReference type="ChEBI" id="CHEBI:30616"/>
    </ligand>
</feature>
<feature type="binding site" evidence="1">
    <location>
        <begin position="53"/>
        <end position="55"/>
    </location>
    <ligand>
        <name>ATP</name>
        <dbReference type="ChEBI" id="CHEBI:30616"/>
    </ligand>
</feature>
<feature type="binding site" evidence="1">
    <location>
        <position position="99"/>
    </location>
    <ligand>
        <name>ATP</name>
        <dbReference type="ChEBI" id="CHEBI:30616"/>
    </ligand>
</feature>
<feature type="binding site" evidence="1">
    <location>
        <position position="102"/>
    </location>
    <ligand>
        <name>ATP</name>
        <dbReference type="ChEBI" id="CHEBI:30616"/>
    </ligand>
</feature>
<feature type="binding site" evidence="1">
    <location>
        <position position="107"/>
    </location>
    <ligand>
        <name>ATP</name>
        <dbReference type="ChEBI" id="CHEBI:30616"/>
    </ligand>
</feature>
<feature type="binding site" evidence="1">
    <location>
        <position position="199"/>
    </location>
    <ligand>
        <name>Mg(2+)</name>
        <dbReference type="ChEBI" id="CHEBI:18420"/>
    </ligand>
</feature>
<feature type="binding site" evidence="1">
    <location>
        <position position="213"/>
    </location>
    <ligand>
        <name>Mg(2+)</name>
        <dbReference type="ChEBI" id="CHEBI:18420"/>
    </ligand>
</feature>
<feature type="binding site" evidence="1">
    <location>
        <position position="264"/>
    </location>
    <ligand>
        <name>substrate</name>
        <note>ligand shared with subunit alpha</note>
    </ligand>
</feature>
<feature type="binding site" evidence="1">
    <location>
        <begin position="321"/>
        <end position="323"/>
    </location>
    <ligand>
        <name>substrate</name>
        <note>ligand shared with subunit alpha</note>
    </ligand>
</feature>
<gene>
    <name evidence="1" type="primary">sucC</name>
    <name type="ordered locus">CGSHiGG_09690</name>
</gene>
<name>SUCC_HAEIG</name>
<sequence length="394" mass="42745">MNLHEYQAKQLFEHYGLPVKNGAVCQSVDEVDLVLAQLSGDKWAAKCQVHAGGRGKAGGVKLVQDVEEARSFAEKWLGQRLVTFQTDKLGQPVNQIYFEETCDIDKEFYLSAVVDRASQKVVFIASPAGGMDIEEVAQNTPHLLHKVEIDPLFGGLPYQGRELAFKLGLSDAQNKQFTDIFMGLSRLFLEKDLSLVEVNPLVLTQQGNLVCLDAKIAVDDNALFRHKDLSALQDLTQNDAREAEAEKFQLNYVALEGDIGCMVNGAGLAMGTMDIVKLYGGKPANFLDVGGGATKERVAEAFKIILTDPSVKVILVNIFGGIVRCDLIAEGVIAAVNEVGVRVPVVVRLEGTNAEIGRQILAESDVNILTAQSLQQATELAVNAAKENSNGDFN</sequence>
<organism>
    <name type="scientific">Haemophilus influenzae (strain PittGG)</name>
    <dbReference type="NCBI Taxonomy" id="374931"/>
    <lineage>
        <taxon>Bacteria</taxon>
        <taxon>Pseudomonadati</taxon>
        <taxon>Pseudomonadota</taxon>
        <taxon>Gammaproteobacteria</taxon>
        <taxon>Pasteurellales</taxon>
        <taxon>Pasteurellaceae</taxon>
        <taxon>Haemophilus</taxon>
    </lineage>
</organism>